<reference key="1">
    <citation type="journal article" date="1994" name="Plant J.">
        <title>Cloning and in vivo expression of functional triose phosphate/phosphate translocators from C3- and C4-plants: evidence for the putative participation of specific amino acid residues in the recognition of phosphoenolpyruvate.</title>
        <authorList>
            <person name="Fischer K."/>
            <person name="Arbinger B."/>
            <person name="Kammerer B."/>
            <person name="Busch C."/>
            <person name="Brink S."/>
            <person name="Wallmeier H."/>
            <person name="Sauer N."/>
            <person name="Eckerskorn C."/>
            <person name="Fluegge U.-I."/>
        </authorList>
    </citation>
    <scope>NUCLEOTIDE SEQUENCE [MRNA]</scope>
    <source>
        <tissue>Leaf</tissue>
    </source>
</reference>
<proteinExistence type="evidence at transcript level"/>
<protein>
    <recommendedName>
        <fullName>Triose phosphate/phosphate translocator, chloroplastic</fullName>
        <shortName>cTPT</shortName>
    </recommendedName>
</protein>
<comment type="function">
    <text>Mediates the export of fixed carbons from the chloroplasts into the cytosol in the form of triose phosphates.</text>
</comment>
<comment type="subunit">
    <text>Homodimer.</text>
</comment>
<comment type="subcellular location">
    <subcellularLocation>
        <location>Plastid</location>
        <location>Chloroplast membrane</location>
        <topology>Multi-pass membrane protein</topology>
    </subcellularLocation>
    <text>Located in zones of contact between the inner and outer membrane of the chloroplast.</text>
</comment>
<comment type="similarity">
    <text evidence="2">Belongs to the TPT transporter family. TPT (TC 2.A.7.9) subfamily.</text>
</comment>
<accession>P49131</accession>
<organism>
    <name type="scientific">Flaveria pringlei</name>
    <dbReference type="NCBI Taxonomy" id="4226"/>
    <lineage>
        <taxon>Eukaryota</taxon>
        <taxon>Viridiplantae</taxon>
        <taxon>Streptophyta</taxon>
        <taxon>Embryophyta</taxon>
        <taxon>Tracheophyta</taxon>
        <taxon>Spermatophyta</taxon>
        <taxon>Magnoliopsida</taxon>
        <taxon>eudicotyledons</taxon>
        <taxon>Gunneridae</taxon>
        <taxon>Pentapetalae</taxon>
        <taxon>asterids</taxon>
        <taxon>campanulids</taxon>
        <taxon>Asterales</taxon>
        <taxon>Asteraceae</taxon>
        <taxon>Asteroideae</taxon>
        <taxon>Heliantheae alliance</taxon>
        <taxon>Tageteae</taxon>
        <taxon>Flaveria</taxon>
    </lineage>
</organism>
<gene>
    <name type="primary">TPT</name>
</gene>
<feature type="transit peptide" description="Chloroplast" evidence="1">
    <location>
        <begin position="1"/>
        <end position="82"/>
    </location>
</feature>
<feature type="chain" id="PRO_0000035705" description="Triose phosphate/phosphate translocator, chloroplastic">
    <location>
        <begin position="83"/>
        <end position="408"/>
    </location>
</feature>
<feature type="topological domain" description="Chloroplast intermembrane" evidence="1">
    <location>
        <begin position="83"/>
        <end position="102"/>
    </location>
</feature>
<feature type="transmembrane region" description="Helical" evidence="1">
    <location>
        <begin position="103"/>
        <end position="123"/>
    </location>
</feature>
<feature type="topological domain" description="Lumenal" evidence="1">
    <location>
        <begin position="124"/>
        <end position="135"/>
    </location>
</feature>
<feature type="transmembrane region" description="Helical" evidence="1">
    <location>
        <begin position="136"/>
        <end position="156"/>
    </location>
</feature>
<feature type="topological domain" description="Chloroplast intermembrane" evidence="1">
    <location>
        <begin position="157"/>
        <end position="213"/>
    </location>
</feature>
<feature type="transmembrane region" description="Helical" evidence="1">
    <location>
        <begin position="214"/>
        <end position="234"/>
    </location>
</feature>
<feature type="topological domain" description="Lumenal" evidence="1">
    <location>
        <begin position="235"/>
        <end position="278"/>
    </location>
</feature>
<feature type="transmembrane region" description="Helical" evidence="1">
    <location>
        <begin position="279"/>
        <end position="298"/>
    </location>
</feature>
<feature type="topological domain" description="Chloroplast intermembrane" evidence="1">
    <location>
        <begin position="299"/>
        <end position="376"/>
    </location>
</feature>
<feature type="transmembrane region" description="Helical" evidence="1">
    <location>
        <begin position="377"/>
        <end position="397"/>
    </location>
</feature>
<feature type="topological domain" description="Lumenal" evidence="1">
    <location>
        <begin position="398"/>
        <end position="408"/>
    </location>
</feature>
<name>TPT_FLAPR</name>
<sequence>MESRVLSSGATTISGIPRLTRPAGRTTTTTVVAVASPAKLNTNGGNLVWGRQLRPSLLNLDHSSPVSLVTKPVKRDVLKPCTATASDSAGDAAPVGFFAKYPFLVTGFFFFMWYFLNVIFNILNKKIYNYFPYPYFVSAIHLAVGVVYCLGGWAVGLPKRAPMDSNLLKLLIPVAFCHALGHVTSNVSFAAVAVSFTHTIKSLEPFFNAAASQFILGQSIPITLWLSLAPVVIGVSMASLTELSFNWLGFISAMISNISFTYRSIYSKKAMTDMDSTNLYAYISIISLLFCIPPAIILEGPQLLKHGFSDAIAKVGMTKFISDLFWVGMFYHLYNQLAINTLERVAPLTHAVGNVLKRVFVIGFSIIVFGNKISTQTAIGTSIAIAGVAVYSLIKAKIEEEKRGLKSA</sequence>
<dbReference type="EMBL" id="Z26633">
    <property type="protein sequence ID" value="CAA81386.1"/>
    <property type="molecule type" value="mRNA"/>
</dbReference>
<dbReference type="PIR" id="S37553">
    <property type="entry name" value="S37553"/>
</dbReference>
<dbReference type="SMR" id="P49131"/>
<dbReference type="GO" id="GO:0031969">
    <property type="term" value="C:chloroplast membrane"/>
    <property type="evidence" value="ECO:0007669"/>
    <property type="project" value="UniProtKB-SubCell"/>
</dbReference>
<dbReference type="GO" id="GO:0015605">
    <property type="term" value="F:organophosphate ester transmembrane transporter activity"/>
    <property type="evidence" value="ECO:0007669"/>
    <property type="project" value="UniProtKB-ARBA"/>
</dbReference>
<dbReference type="GO" id="GO:0015120">
    <property type="term" value="F:phosphoglycerate transmembrane transporter activity"/>
    <property type="evidence" value="ECO:0007669"/>
    <property type="project" value="UniProtKB-ARBA"/>
</dbReference>
<dbReference type="InterPro" id="IPR004853">
    <property type="entry name" value="Sugar_P_trans_dom"/>
</dbReference>
<dbReference type="InterPro" id="IPR004696">
    <property type="entry name" value="Tpt_PEP_transl"/>
</dbReference>
<dbReference type="InterPro" id="IPR050186">
    <property type="entry name" value="TPT_transporter"/>
</dbReference>
<dbReference type="NCBIfam" id="TIGR00817">
    <property type="entry name" value="tpt"/>
    <property type="match status" value="1"/>
</dbReference>
<dbReference type="PANTHER" id="PTHR11132">
    <property type="entry name" value="SOLUTE CARRIER FAMILY 35"/>
    <property type="match status" value="1"/>
</dbReference>
<dbReference type="Pfam" id="PF03151">
    <property type="entry name" value="TPT"/>
    <property type="match status" value="1"/>
</dbReference>
<dbReference type="SUPFAM" id="SSF103481">
    <property type="entry name" value="Multidrug resistance efflux transporter EmrE"/>
    <property type="match status" value="1"/>
</dbReference>
<evidence type="ECO:0000255" key="1"/>
<evidence type="ECO:0000305" key="2"/>
<keyword id="KW-0150">Chloroplast</keyword>
<keyword id="KW-0472">Membrane</keyword>
<keyword id="KW-0934">Plastid</keyword>
<keyword id="KW-0809">Transit peptide</keyword>
<keyword id="KW-0812">Transmembrane</keyword>
<keyword id="KW-1133">Transmembrane helix</keyword>
<keyword id="KW-0813">Transport</keyword>